<keyword id="KW-0227">DNA damage</keyword>
<keyword id="KW-0234">DNA repair</keyword>
<keyword id="KW-0255">Endonuclease</keyword>
<keyword id="KW-0378">Hydrolase</keyword>
<keyword id="KW-0479">Metal-binding</keyword>
<keyword id="KW-0540">Nuclease</keyword>
<keyword id="KW-0862">Zinc</keyword>
<dbReference type="EC" id="3.1.21.2" evidence="1"/>
<dbReference type="EMBL" id="FM242711">
    <property type="protein sequence ID" value="CAS05221.1"/>
    <property type="molecule type" value="Genomic_DNA"/>
</dbReference>
<dbReference type="RefSeq" id="WP_012681296.1">
    <property type="nucleotide sequence ID" value="NC_012488.1"/>
</dbReference>
<dbReference type="SMR" id="C1KV96"/>
<dbReference type="KEGG" id="lmc:Lm4b_01459"/>
<dbReference type="HOGENOM" id="CLU_025885_4_1_9"/>
<dbReference type="GO" id="GO:0008833">
    <property type="term" value="F:deoxyribonuclease IV (phage-T4-induced) activity"/>
    <property type="evidence" value="ECO:0007669"/>
    <property type="project" value="UniProtKB-UniRule"/>
</dbReference>
<dbReference type="GO" id="GO:0003677">
    <property type="term" value="F:DNA binding"/>
    <property type="evidence" value="ECO:0007669"/>
    <property type="project" value="InterPro"/>
</dbReference>
<dbReference type="GO" id="GO:0003906">
    <property type="term" value="F:DNA-(apurinic or apyrimidinic site) endonuclease activity"/>
    <property type="evidence" value="ECO:0007669"/>
    <property type="project" value="TreeGrafter"/>
</dbReference>
<dbReference type="GO" id="GO:0008081">
    <property type="term" value="F:phosphoric diester hydrolase activity"/>
    <property type="evidence" value="ECO:0007669"/>
    <property type="project" value="TreeGrafter"/>
</dbReference>
<dbReference type="GO" id="GO:0008270">
    <property type="term" value="F:zinc ion binding"/>
    <property type="evidence" value="ECO:0007669"/>
    <property type="project" value="UniProtKB-UniRule"/>
</dbReference>
<dbReference type="GO" id="GO:0006284">
    <property type="term" value="P:base-excision repair"/>
    <property type="evidence" value="ECO:0007669"/>
    <property type="project" value="TreeGrafter"/>
</dbReference>
<dbReference type="CDD" id="cd00019">
    <property type="entry name" value="AP2Ec"/>
    <property type="match status" value="1"/>
</dbReference>
<dbReference type="FunFam" id="3.20.20.150:FF:000001">
    <property type="entry name" value="Probable endonuclease 4"/>
    <property type="match status" value="1"/>
</dbReference>
<dbReference type="Gene3D" id="3.20.20.150">
    <property type="entry name" value="Divalent-metal-dependent TIM barrel enzymes"/>
    <property type="match status" value="1"/>
</dbReference>
<dbReference type="HAMAP" id="MF_00152">
    <property type="entry name" value="Nfo"/>
    <property type="match status" value="1"/>
</dbReference>
<dbReference type="InterPro" id="IPR001719">
    <property type="entry name" value="AP_endonuc_2"/>
</dbReference>
<dbReference type="InterPro" id="IPR018246">
    <property type="entry name" value="AP_endonuc_F2_Zn_BS"/>
</dbReference>
<dbReference type="InterPro" id="IPR036237">
    <property type="entry name" value="Xyl_isomerase-like_sf"/>
</dbReference>
<dbReference type="InterPro" id="IPR013022">
    <property type="entry name" value="Xyl_isomerase-like_TIM-brl"/>
</dbReference>
<dbReference type="NCBIfam" id="TIGR00587">
    <property type="entry name" value="nfo"/>
    <property type="match status" value="1"/>
</dbReference>
<dbReference type="NCBIfam" id="NF002196">
    <property type="entry name" value="PRK01060.1-1"/>
    <property type="match status" value="1"/>
</dbReference>
<dbReference type="PANTHER" id="PTHR21445:SF0">
    <property type="entry name" value="APURINIC-APYRIMIDINIC ENDONUCLEASE"/>
    <property type="match status" value="1"/>
</dbReference>
<dbReference type="PANTHER" id="PTHR21445">
    <property type="entry name" value="ENDONUCLEASE IV ENDODEOXYRIBONUCLEASE IV"/>
    <property type="match status" value="1"/>
</dbReference>
<dbReference type="Pfam" id="PF01261">
    <property type="entry name" value="AP_endonuc_2"/>
    <property type="match status" value="1"/>
</dbReference>
<dbReference type="SMART" id="SM00518">
    <property type="entry name" value="AP2Ec"/>
    <property type="match status" value="1"/>
</dbReference>
<dbReference type="SUPFAM" id="SSF51658">
    <property type="entry name" value="Xylose isomerase-like"/>
    <property type="match status" value="1"/>
</dbReference>
<dbReference type="PROSITE" id="PS00729">
    <property type="entry name" value="AP_NUCLEASE_F2_1"/>
    <property type="match status" value="1"/>
</dbReference>
<dbReference type="PROSITE" id="PS00730">
    <property type="entry name" value="AP_NUCLEASE_F2_2"/>
    <property type="match status" value="1"/>
</dbReference>
<dbReference type="PROSITE" id="PS00731">
    <property type="entry name" value="AP_NUCLEASE_F2_3"/>
    <property type="match status" value="1"/>
</dbReference>
<dbReference type="PROSITE" id="PS51432">
    <property type="entry name" value="AP_NUCLEASE_F2_4"/>
    <property type="match status" value="1"/>
</dbReference>
<sequence length="297" mass="32747">MLRLGSHVSMSGKKMLLGASEEAASYGSNTFMIYTGAPQNTRRKPIEELNIEAGLEHMKAHDMADIVVHAPYIINIGNSVKPETFELGVNFLQSEIERTRALGAKQIVLHPGAHVGEGADKGIKQIIQGLNEALIHDQDVQIALETMAGKGSECGRTFEEIAQIIDGVTHNELLSVTFDTCHTHDAGYDIVNDFDGVLNEFDKIIGVDRLKVLHINDSKNECGAHKDRHANIGFGHIGFDALHYIVHHPQLADVPKILETPYVGEDKASKKAPYKWEIAMLRNGEFDPDLLNKIQNS</sequence>
<feature type="chain" id="PRO_1000203441" description="Probable endonuclease 4">
    <location>
        <begin position="1"/>
        <end position="297"/>
    </location>
</feature>
<feature type="binding site" evidence="1">
    <location>
        <position position="69"/>
    </location>
    <ligand>
        <name>Zn(2+)</name>
        <dbReference type="ChEBI" id="CHEBI:29105"/>
        <label>1</label>
    </ligand>
</feature>
<feature type="binding site" evidence="1">
    <location>
        <position position="110"/>
    </location>
    <ligand>
        <name>Zn(2+)</name>
        <dbReference type="ChEBI" id="CHEBI:29105"/>
        <label>1</label>
    </ligand>
</feature>
<feature type="binding site" evidence="1">
    <location>
        <position position="145"/>
    </location>
    <ligand>
        <name>Zn(2+)</name>
        <dbReference type="ChEBI" id="CHEBI:29105"/>
        <label>1</label>
    </ligand>
</feature>
<feature type="binding site" evidence="1">
    <location>
        <position position="145"/>
    </location>
    <ligand>
        <name>Zn(2+)</name>
        <dbReference type="ChEBI" id="CHEBI:29105"/>
        <label>2</label>
    </ligand>
</feature>
<feature type="binding site" evidence="1">
    <location>
        <position position="179"/>
    </location>
    <ligand>
        <name>Zn(2+)</name>
        <dbReference type="ChEBI" id="CHEBI:29105"/>
        <label>2</label>
    </ligand>
</feature>
<feature type="binding site" evidence="1">
    <location>
        <position position="182"/>
    </location>
    <ligand>
        <name>Zn(2+)</name>
        <dbReference type="ChEBI" id="CHEBI:29105"/>
        <label>3</label>
    </ligand>
</feature>
<feature type="binding site" evidence="1">
    <location>
        <position position="214"/>
    </location>
    <ligand>
        <name>Zn(2+)</name>
        <dbReference type="ChEBI" id="CHEBI:29105"/>
        <label>2</label>
    </ligand>
</feature>
<feature type="binding site" evidence="1">
    <location>
        <position position="227"/>
    </location>
    <ligand>
        <name>Zn(2+)</name>
        <dbReference type="ChEBI" id="CHEBI:29105"/>
        <label>3</label>
    </ligand>
</feature>
<feature type="binding site" evidence="1">
    <location>
        <position position="229"/>
    </location>
    <ligand>
        <name>Zn(2+)</name>
        <dbReference type="ChEBI" id="CHEBI:29105"/>
        <label>3</label>
    </ligand>
</feature>
<feature type="binding site" evidence="1">
    <location>
        <position position="259"/>
    </location>
    <ligand>
        <name>Zn(2+)</name>
        <dbReference type="ChEBI" id="CHEBI:29105"/>
        <label>2</label>
    </ligand>
</feature>
<reference key="1">
    <citation type="journal article" date="2012" name="BMC Genomics">
        <title>Comparative genomics and transcriptomics of lineages I, II, and III strains of Listeria monocytogenes.</title>
        <authorList>
            <person name="Hain T."/>
            <person name="Ghai R."/>
            <person name="Billion A."/>
            <person name="Kuenne C.T."/>
            <person name="Steinweg C."/>
            <person name="Izar B."/>
            <person name="Mohamed W."/>
            <person name="Mraheil M."/>
            <person name="Domann E."/>
            <person name="Schaffrath S."/>
            <person name="Karst U."/>
            <person name="Goesmann A."/>
            <person name="Oehm S."/>
            <person name="Puhler A."/>
            <person name="Merkl R."/>
            <person name="Vorwerk S."/>
            <person name="Glaser P."/>
            <person name="Garrido P."/>
            <person name="Rusniok C."/>
            <person name="Buchrieser C."/>
            <person name="Goebel W."/>
            <person name="Chakraborty T."/>
        </authorList>
    </citation>
    <scope>NUCLEOTIDE SEQUENCE [LARGE SCALE GENOMIC DNA]</scope>
    <source>
        <strain>CLIP80459</strain>
    </source>
</reference>
<name>END4_LISMC</name>
<proteinExistence type="inferred from homology"/>
<gene>
    <name evidence="1" type="primary">nfo</name>
    <name type="ordered locus">Lm4b_01459</name>
</gene>
<comment type="function">
    <text evidence="1">Endonuclease IV plays a role in DNA repair. It cleaves phosphodiester bonds at apurinic or apyrimidinic (AP) sites, generating a 3'-hydroxyl group and a 5'-terminal sugar phosphate.</text>
</comment>
<comment type="catalytic activity">
    <reaction evidence="1">
        <text>Endonucleolytic cleavage to 5'-phosphooligonucleotide end-products.</text>
        <dbReference type="EC" id="3.1.21.2"/>
    </reaction>
</comment>
<comment type="cofactor">
    <cofactor evidence="1">
        <name>Zn(2+)</name>
        <dbReference type="ChEBI" id="CHEBI:29105"/>
    </cofactor>
    <text evidence="1">Binds 3 Zn(2+) ions.</text>
</comment>
<comment type="similarity">
    <text evidence="1">Belongs to the AP endonuclease 2 family.</text>
</comment>
<protein>
    <recommendedName>
        <fullName evidence="1">Probable endonuclease 4</fullName>
        <ecNumber evidence="1">3.1.21.2</ecNumber>
    </recommendedName>
    <alternativeName>
        <fullName evidence="1">Endodeoxyribonuclease IV</fullName>
    </alternativeName>
    <alternativeName>
        <fullName evidence="1">Endonuclease IV</fullName>
    </alternativeName>
</protein>
<organism>
    <name type="scientific">Listeria monocytogenes serotype 4b (strain CLIP80459)</name>
    <dbReference type="NCBI Taxonomy" id="568819"/>
    <lineage>
        <taxon>Bacteria</taxon>
        <taxon>Bacillati</taxon>
        <taxon>Bacillota</taxon>
        <taxon>Bacilli</taxon>
        <taxon>Bacillales</taxon>
        <taxon>Listeriaceae</taxon>
        <taxon>Listeria</taxon>
    </lineage>
</organism>
<accession>C1KV96</accession>
<evidence type="ECO:0000255" key="1">
    <source>
        <dbReference type="HAMAP-Rule" id="MF_00152"/>
    </source>
</evidence>